<accession>Q6MDF9</accession>
<keyword id="KW-1185">Reference proteome</keyword>
<keyword id="KW-0687">Ribonucleoprotein</keyword>
<keyword id="KW-0689">Ribosomal protein</keyword>
<sequence>MSKVCQVTGRKPTRGYKYAIRGIAKKKKGIGLKVTGKTKRRFQPNLFKKRIWFAEENRFITLKLSTAALRTIDRLGVFAVVRKMRANGQSV</sequence>
<dbReference type="EMBL" id="BX908798">
    <property type="protein sequence ID" value="CAF23390.1"/>
    <property type="molecule type" value="Genomic_DNA"/>
</dbReference>
<dbReference type="RefSeq" id="WP_011175216.1">
    <property type="nucleotide sequence ID" value="NC_005861.2"/>
</dbReference>
<dbReference type="SMR" id="Q6MDF9"/>
<dbReference type="STRING" id="264201.pc0666"/>
<dbReference type="KEGG" id="pcu:PC_RS03195"/>
<dbReference type="eggNOG" id="COG0227">
    <property type="taxonomic scope" value="Bacteria"/>
</dbReference>
<dbReference type="HOGENOM" id="CLU_064548_3_2_0"/>
<dbReference type="OrthoDB" id="9805609at2"/>
<dbReference type="Proteomes" id="UP000000529">
    <property type="component" value="Chromosome"/>
</dbReference>
<dbReference type="GO" id="GO:1990904">
    <property type="term" value="C:ribonucleoprotein complex"/>
    <property type="evidence" value="ECO:0007669"/>
    <property type="project" value="UniProtKB-KW"/>
</dbReference>
<dbReference type="GO" id="GO:0005840">
    <property type="term" value="C:ribosome"/>
    <property type="evidence" value="ECO:0007669"/>
    <property type="project" value="UniProtKB-KW"/>
</dbReference>
<dbReference type="GO" id="GO:0003735">
    <property type="term" value="F:structural constituent of ribosome"/>
    <property type="evidence" value="ECO:0007669"/>
    <property type="project" value="InterPro"/>
</dbReference>
<dbReference type="GO" id="GO:0006412">
    <property type="term" value="P:translation"/>
    <property type="evidence" value="ECO:0007669"/>
    <property type="project" value="UniProtKB-UniRule"/>
</dbReference>
<dbReference type="Gene3D" id="2.30.170.40">
    <property type="entry name" value="Ribosomal protein L28/L24"/>
    <property type="match status" value="1"/>
</dbReference>
<dbReference type="HAMAP" id="MF_00373">
    <property type="entry name" value="Ribosomal_bL28"/>
    <property type="match status" value="1"/>
</dbReference>
<dbReference type="InterPro" id="IPR026569">
    <property type="entry name" value="Ribosomal_bL28"/>
</dbReference>
<dbReference type="InterPro" id="IPR034704">
    <property type="entry name" value="Ribosomal_bL28/bL31-like_sf"/>
</dbReference>
<dbReference type="InterPro" id="IPR001383">
    <property type="entry name" value="Ribosomal_bL28_bact-type"/>
</dbReference>
<dbReference type="InterPro" id="IPR037147">
    <property type="entry name" value="Ribosomal_bL28_sf"/>
</dbReference>
<dbReference type="NCBIfam" id="TIGR00009">
    <property type="entry name" value="L28"/>
    <property type="match status" value="1"/>
</dbReference>
<dbReference type="PANTHER" id="PTHR13528">
    <property type="entry name" value="39S RIBOSOMAL PROTEIN L28, MITOCHONDRIAL"/>
    <property type="match status" value="1"/>
</dbReference>
<dbReference type="PANTHER" id="PTHR13528:SF2">
    <property type="entry name" value="LARGE RIBOSOMAL SUBUNIT PROTEIN BL28M"/>
    <property type="match status" value="1"/>
</dbReference>
<dbReference type="Pfam" id="PF00830">
    <property type="entry name" value="Ribosomal_L28"/>
    <property type="match status" value="1"/>
</dbReference>
<dbReference type="SUPFAM" id="SSF143800">
    <property type="entry name" value="L28p-like"/>
    <property type="match status" value="1"/>
</dbReference>
<evidence type="ECO:0000255" key="1">
    <source>
        <dbReference type="HAMAP-Rule" id="MF_00373"/>
    </source>
</evidence>
<evidence type="ECO:0000305" key="2"/>
<name>RL28_PARUW</name>
<gene>
    <name evidence="1" type="primary">rpmB</name>
    <name type="ordered locus">pc0666</name>
</gene>
<comment type="similarity">
    <text evidence="1">Belongs to the bacterial ribosomal protein bL28 family.</text>
</comment>
<organism>
    <name type="scientific">Protochlamydia amoebophila (strain UWE25)</name>
    <dbReference type="NCBI Taxonomy" id="264201"/>
    <lineage>
        <taxon>Bacteria</taxon>
        <taxon>Pseudomonadati</taxon>
        <taxon>Chlamydiota</taxon>
        <taxon>Chlamydiia</taxon>
        <taxon>Parachlamydiales</taxon>
        <taxon>Parachlamydiaceae</taxon>
        <taxon>Candidatus Protochlamydia</taxon>
    </lineage>
</organism>
<proteinExistence type="inferred from homology"/>
<feature type="chain" id="PRO_0000178522" description="Large ribosomal subunit protein bL28">
    <location>
        <begin position="1"/>
        <end position="91"/>
    </location>
</feature>
<protein>
    <recommendedName>
        <fullName evidence="1">Large ribosomal subunit protein bL28</fullName>
    </recommendedName>
    <alternativeName>
        <fullName evidence="2">50S ribosomal protein L28</fullName>
    </alternativeName>
</protein>
<reference key="1">
    <citation type="journal article" date="2004" name="Science">
        <title>Illuminating the evolutionary history of chlamydiae.</title>
        <authorList>
            <person name="Horn M."/>
            <person name="Collingro A."/>
            <person name="Schmitz-Esser S."/>
            <person name="Beier C.L."/>
            <person name="Purkhold U."/>
            <person name="Fartmann B."/>
            <person name="Brandt P."/>
            <person name="Nyakatura G.J."/>
            <person name="Droege M."/>
            <person name="Frishman D."/>
            <person name="Rattei T."/>
            <person name="Mewes H.-W."/>
            <person name="Wagner M."/>
        </authorList>
    </citation>
    <scope>NUCLEOTIDE SEQUENCE [LARGE SCALE GENOMIC DNA]</scope>
    <source>
        <strain>UWE25</strain>
    </source>
</reference>